<gene>
    <name type="primary">Mstn</name>
    <name type="synonym">Gdf8</name>
</gene>
<proteinExistence type="evidence at transcript level"/>
<organism>
    <name type="scientific">Rattus norvegicus</name>
    <name type="common">Rat</name>
    <dbReference type="NCBI Taxonomy" id="10116"/>
    <lineage>
        <taxon>Eukaryota</taxon>
        <taxon>Metazoa</taxon>
        <taxon>Chordata</taxon>
        <taxon>Craniata</taxon>
        <taxon>Vertebrata</taxon>
        <taxon>Euteleostomi</taxon>
        <taxon>Mammalia</taxon>
        <taxon>Eutheria</taxon>
        <taxon>Euarchontoglires</taxon>
        <taxon>Glires</taxon>
        <taxon>Rodentia</taxon>
        <taxon>Myomorpha</taxon>
        <taxon>Muroidea</taxon>
        <taxon>Muridae</taxon>
        <taxon>Murinae</taxon>
        <taxon>Rattus</taxon>
    </lineage>
</organism>
<keyword id="KW-0165">Cleavage on pair of basic residues</keyword>
<keyword id="KW-0202">Cytokine</keyword>
<keyword id="KW-1015">Disulfide bond</keyword>
<keyword id="KW-0325">Glycoprotein</keyword>
<keyword id="KW-0339">Growth factor</keyword>
<keyword id="KW-0358">Heparin-binding</keyword>
<keyword id="KW-1185">Reference proteome</keyword>
<keyword id="KW-0964">Secreted</keyword>
<keyword id="KW-0732">Signal</keyword>
<accession>O35312</accession>
<sequence>MIQKPQMYVYIYLFVLIAAGPVDLNEDSEREANVEKEGLCNACAWRQNTRYSRIEAIKIQILSKLRLETAPNISKDAIRQLLPRAPPLRELIDQYDVQRDDSSDGSLEDDDYHATTETIITMPTESDFLMQADGKPKCCFFKFSSKIQYNKVVKAQLWIYLRAVKTPTTVFVQILRLIKPMKDGTRYTGIRSLKLDMSPGTGIWQSIDVKTVLQNWLKQPESNLGIEIKALDENGHDLAVTFPGPGEDGLNPFLEVKVTDTPKRSRRDFGLDCDEHSTESRCCRYPLTVDFEAFGWDWIIAPKRYKANYCSGECEFVFLQKYPHTHLVHQANPRGSAGPCCTPTKMSPINMLYFNGKEQIIYGKIPAMVVDRCGCS</sequence>
<name>GDF8_RAT</name>
<comment type="function">
    <text evidence="1">Acts specifically as a negative regulator of skeletal muscle growth.</text>
</comment>
<comment type="subunit">
    <text evidence="1">Homodimer; disulfide-linked. Interacts with WFIKKN2, leading to inhibit its activity. Interacts with FSTL3.</text>
</comment>
<comment type="subcellular location">
    <subcellularLocation>
        <location evidence="1">Secreted</location>
    </subcellularLocation>
</comment>
<comment type="PTM">
    <text evidence="1">Synthesized as large precursor molecule that undergoes proteolytic cleavage to generate an N-terminal propeptide and a disulfide linked C-terminal dimer, which is the biologically active molecule. The circulating form consists of a latent complex of the C-terminal dimer and other proteins, including its propeptide, which maintain the C-terminal dimer in a latent, inactive state. Ligand activation requires additional cleavage of the prodomain by a tolloid-like metalloproteinase.</text>
</comment>
<comment type="similarity">
    <text evidence="4">Belongs to the TGF-beta family.</text>
</comment>
<reference key="1">
    <citation type="journal article" date="1997" name="Proc. Natl. Acad. Sci. U.S.A.">
        <title>Double muscling in cattle due to mutations in the myostatin gene.</title>
        <authorList>
            <person name="McPherron A.C."/>
            <person name="Lee S.-J."/>
        </authorList>
    </citation>
    <scope>NUCLEOTIDE SEQUENCE [MRNA]</scope>
    <source>
        <tissue>Skeletal muscle</tissue>
    </source>
</reference>
<feature type="signal peptide" evidence="3">
    <location>
        <begin position="1"/>
        <end position="24"/>
    </location>
</feature>
<feature type="propeptide" id="PRO_0000033962" evidence="3">
    <location>
        <begin position="25"/>
        <end position="267"/>
    </location>
</feature>
<feature type="chain" id="PRO_0000033963" description="Growth/differentiation factor 8">
    <location>
        <begin position="268"/>
        <end position="376"/>
    </location>
</feature>
<feature type="site" description="Cleavage" evidence="1">
    <location>
        <begin position="99"/>
        <end position="100"/>
    </location>
</feature>
<feature type="glycosylation site" description="N-linked (GlcNAc...) asparagine" evidence="3">
    <location>
        <position position="72"/>
    </location>
</feature>
<feature type="disulfide bond" evidence="2">
    <location>
        <begin position="273"/>
        <end position="283"/>
    </location>
</feature>
<feature type="disulfide bond" evidence="2">
    <location>
        <begin position="282"/>
        <end position="341"/>
    </location>
</feature>
<feature type="disulfide bond" evidence="2">
    <location>
        <begin position="310"/>
        <end position="373"/>
    </location>
</feature>
<feature type="disulfide bond" evidence="2">
    <location>
        <begin position="314"/>
        <end position="375"/>
    </location>
</feature>
<feature type="disulfide bond" description="Interchain" evidence="2">
    <location>
        <position position="340"/>
    </location>
</feature>
<protein>
    <recommendedName>
        <fullName>Growth/differentiation factor 8</fullName>
        <shortName>GDF-8</shortName>
    </recommendedName>
    <alternativeName>
        <fullName>Myostatin</fullName>
    </alternativeName>
</protein>
<dbReference type="EMBL" id="AF019624">
    <property type="protein sequence ID" value="AAB86691.1"/>
    <property type="molecule type" value="mRNA"/>
</dbReference>
<dbReference type="RefSeq" id="NP_062024.1">
    <property type="nucleotide sequence ID" value="NM_019151.2"/>
</dbReference>
<dbReference type="SMR" id="O35312"/>
<dbReference type="FunCoup" id="O35312">
    <property type="interactions" value="495"/>
</dbReference>
<dbReference type="STRING" id="10116.ENSRNOP00000038159"/>
<dbReference type="GlyCosmos" id="O35312">
    <property type="glycosylation" value="1 site, No reported glycans"/>
</dbReference>
<dbReference type="GlyGen" id="O35312">
    <property type="glycosylation" value="1 site"/>
</dbReference>
<dbReference type="PhosphoSitePlus" id="O35312"/>
<dbReference type="PaxDb" id="10116-ENSRNOP00000038159"/>
<dbReference type="ABCD" id="O35312">
    <property type="antibodies" value="2 sequenced antibodies"/>
</dbReference>
<dbReference type="Ensembl" id="ENSRNOT00000038093.4">
    <property type="protein sequence ID" value="ENSRNOP00000038159.1"/>
    <property type="gene ID" value="ENSRNOG00000021294.4"/>
</dbReference>
<dbReference type="GeneID" id="29152"/>
<dbReference type="KEGG" id="rno:29152"/>
<dbReference type="UCSC" id="RGD:3115">
    <property type="organism name" value="rat"/>
</dbReference>
<dbReference type="AGR" id="RGD:3115"/>
<dbReference type="CTD" id="2660"/>
<dbReference type="RGD" id="3115">
    <property type="gene designation" value="Mstn"/>
</dbReference>
<dbReference type="eggNOG" id="KOG3900">
    <property type="taxonomic scope" value="Eukaryota"/>
</dbReference>
<dbReference type="GeneTree" id="ENSGT00940000160657"/>
<dbReference type="HOGENOM" id="CLU_020515_6_1_1"/>
<dbReference type="InParanoid" id="O35312"/>
<dbReference type="OMA" id="CNACMWR"/>
<dbReference type="OrthoDB" id="5948587at2759"/>
<dbReference type="PhylomeDB" id="O35312"/>
<dbReference type="TreeFam" id="TF318514"/>
<dbReference type="PRO" id="PR:O35312"/>
<dbReference type="Proteomes" id="UP000002494">
    <property type="component" value="Chromosome 9"/>
</dbReference>
<dbReference type="Bgee" id="ENSRNOG00000021294">
    <property type="expression patterns" value="Expressed in quadriceps femoris and 7 other cell types or tissues"/>
</dbReference>
<dbReference type="GO" id="GO:0005615">
    <property type="term" value="C:extracellular space"/>
    <property type="evidence" value="ECO:0000314"/>
    <property type="project" value="RGD"/>
</dbReference>
<dbReference type="GO" id="GO:0005125">
    <property type="term" value="F:cytokine activity"/>
    <property type="evidence" value="ECO:0000266"/>
    <property type="project" value="RGD"/>
</dbReference>
<dbReference type="GO" id="GO:0008083">
    <property type="term" value="F:growth factor activity"/>
    <property type="evidence" value="ECO:0007669"/>
    <property type="project" value="UniProtKB-KW"/>
</dbReference>
<dbReference type="GO" id="GO:0008201">
    <property type="term" value="F:heparin binding"/>
    <property type="evidence" value="ECO:0000266"/>
    <property type="project" value="RGD"/>
</dbReference>
<dbReference type="GO" id="GO:0042802">
    <property type="term" value="F:identical protein binding"/>
    <property type="evidence" value="ECO:0000250"/>
    <property type="project" value="UniProtKB"/>
</dbReference>
<dbReference type="GO" id="GO:0042803">
    <property type="term" value="F:protein homodimerization activity"/>
    <property type="evidence" value="ECO:0000266"/>
    <property type="project" value="RGD"/>
</dbReference>
<dbReference type="GO" id="GO:0043539">
    <property type="term" value="F:protein serine/threonine kinase activator activity"/>
    <property type="evidence" value="ECO:0000266"/>
    <property type="project" value="RGD"/>
</dbReference>
<dbReference type="GO" id="GO:0005102">
    <property type="term" value="F:signaling receptor binding"/>
    <property type="evidence" value="ECO:0000266"/>
    <property type="project" value="RGD"/>
</dbReference>
<dbReference type="GO" id="GO:0071549">
    <property type="term" value="P:cellular response to dexamethasone stimulus"/>
    <property type="evidence" value="ECO:0000266"/>
    <property type="project" value="RGD"/>
</dbReference>
<dbReference type="GO" id="GO:0071456">
    <property type="term" value="P:cellular response to hypoxia"/>
    <property type="evidence" value="ECO:0000270"/>
    <property type="project" value="RGD"/>
</dbReference>
<dbReference type="GO" id="GO:0046716">
    <property type="term" value="P:muscle cell cellular homeostasis"/>
    <property type="evidence" value="ECO:0000266"/>
    <property type="project" value="RGD"/>
</dbReference>
<dbReference type="GO" id="GO:0014839">
    <property type="term" value="P:myoblast migration involved in skeletal muscle regeneration"/>
    <property type="evidence" value="ECO:0000250"/>
    <property type="project" value="UniProtKB"/>
</dbReference>
<dbReference type="GO" id="GO:0046627">
    <property type="term" value="P:negative regulation of insulin receptor signaling pathway"/>
    <property type="evidence" value="ECO:0000266"/>
    <property type="project" value="RGD"/>
</dbReference>
<dbReference type="GO" id="GO:0014741">
    <property type="term" value="P:negative regulation of muscle hypertrophy"/>
    <property type="evidence" value="ECO:0000315"/>
    <property type="project" value="RGD"/>
</dbReference>
<dbReference type="GO" id="GO:0045662">
    <property type="term" value="P:negative regulation of myoblast differentiation"/>
    <property type="evidence" value="ECO:0000266"/>
    <property type="project" value="RGD"/>
</dbReference>
<dbReference type="GO" id="GO:2000818">
    <property type="term" value="P:negative regulation of myoblast proliferation"/>
    <property type="evidence" value="ECO:0000250"/>
    <property type="project" value="AgBase"/>
</dbReference>
<dbReference type="GO" id="GO:0051898">
    <property type="term" value="P:negative regulation of phosphatidylinositol 3-kinase/protein kinase B signal transduction"/>
    <property type="evidence" value="ECO:0000266"/>
    <property type="project" value="RGD"/>
</dbReference>
<dbReference type="GO" id="GO:1902725">
    <property type="term" value="P:negative regulation of satellite cell differentiation"/>
    <property type="evidence" value="ECO:0000250"/>
    <property type="project" value="AgBase"/>
</dbReference>
<dbReference type="GO" id="GO:1902723">
    <property type="term" value="P:negative regulation of skeletal muscle satellite cell proliferation"/>
    <property type="evidence" value="ECO:0000250"/>
    <property type="project" value="AgBase"/>
</dbReference>
<dbReference type="GO" id="GO:0048632">
    <property type="term" value="P:negative regulation of skeletal muscle tissue growth"/>
    <property type="evidence" value="ECO:0000315"/>
    <property type="project" value="RGD"/>
</dbReference>
<dbReference type="GO" id="GO:0022602">
    <property type="term" value="P:ovulation cycle process"/>
    <property type="evidence" value="ECO:0000270"/>
    <property type="project" value="RGD"/>
</dbReference>
<dbReference type="GO" id="GO:0045893">
    <property type="term" value="P:positive regulation of DNA-templated transcription"/>
    <property type="evidence" value="ECO:0000266"/>
    <property type="project" value="RGD"/>
</dbReference>
<dbReference type="GO" id="GO:0010592">
    <property type="term" value="P:positive regulation of lamellipodium assembly"/>
    <property type="evidence" value="ECO:0000250"/>
    <property type="project" value="UniProtKB"/>
</dbReference>
<dbReference type="GO" id="GO:0010759">
    <property type="term" value="P:positive regulation of macrophage chemotaxis"/>
    <property type="evidence" value="ECO:0000250"/>
    <property type="project" value="UniProtKB"/>
</dbReference>
<dbReference type="GO" id="GO:0051602">
    <property type="term" value="P:response to electrical stimulus"/>
    <property type="evidence" value="ECO:0000270"/>
    <property type="project" value="RGD"/>
</dbReference>
<dbReference type="GO" id="GO:0043627">
    <property type="term" value="P:response to estrogen"/>
    <property type="evidence" value="ECO:0000270"/>
    <property type="project" value="RGD"/>
</dbReference>
<dbReference type="GO" id="GO:0045471">
    <property type="term" value="P:response to ethanol"/>
    <property type="evidence" value="ECO:0000270"/>
    <property type="project" value="RGD"/>
</dbReference>
<dbReference type="GO" id="GO:0051384">
    <property type="term" value="P:response to glucocorticoid"/>
    <property type="evidence" value="ECO:0000270"/>
    <property type="project" value="RGD"/>
</dbReference>
<dbReference type="GO" id="GO:0009629">
    <property type="term" value="P:response to gravity"/>
    <property type="evidence" value="ECO:0000270"/>
    <property type="project" value="RGD"/>
</dbReference>
<dbReference type="GO" id="GO:0014850">
    <property type="term" value="P:response to muscle activity"/>
    <property type="evidence" value="ECO:0000270"/>
    <property type="project" value="RGD"/>
</dbReference>
<dbReference type="GO" id="GO:0033574">
    <property type="term" value="P:response to testosterone"/>
    <property type="evidence" value="ECO:0000270"/>
    <property type="project" value="RGD"/>
</dbReference>
<dbReference type="GO" id="GO:0014732">
    <property type="term" value="P:skeletal muscle atrophy"/>
    <property type="evidence" value="ECO:0000270"/>
    <property type="project" value="RGD"/>
</dbReference>
<dbReference type="GO" id="GO:0014816">
    <property type="term" value="P:skeletal muscle satellite cell differentiation"/>
    <property type="evidence" value="ECO:0000266"/>
    <property type="project" value="RGD"/>
</dbReference>
<dbReference type="GO" id="GO:0043403">
    <property type="term" value="P:skeletal muscle tissue regeneration"/>
    <property type="evidence" value="ECO:0000270"/>
    <property type="project" value="RGD"/>
</dbReference>
<dbReference type="GO" id="GO:0007179">
    <property type="term" value="P:transforming growth factor beta receptor signaling pathway"/>
    <property type="evidence" value="ECO:0000266"/>
    <property type="project" value="RGD"/>
</dbReference>
<dbReference type="CDD" id="cd19388">
    <property type="entry name" value="TGF_beta_GDF8"/>
    <property type="match status" value="1"/>
</dbReference>
<dbReference type="FunFam" id="2.60.120.970:FF:000001">
    <property type="entry name" value="Growth/differentiation factor 8"/>
    <property type="match status" value="1"/>
</dbReference>
<dbReference type="FunFam" id="2.10.90.10:FF:000006">
    <property type="entry name" value="growth/differentiation factor 8"/>
    <property type="match status" value="1"/>
</dbReference>
<dbReference type="Gene3D" id="2.60.120.970">
    <property type="match status" value="1"/>
</dbReference>
<dbReference type="Gene3D" id="2.10.90.10">
    <property type="entry name" value="Cystine-knot cytokines"/>
    <property type="match status" value="1"/>
</dbReference>
<dbReference type="InterPro" id="IPR029034">
    <property type="entry name" value="Cystine-knot_cytokine"/>
</dbReference>
<dbReference type="InterPro" id="IPR001839">
    <property type="entry name" value="TGF-b_C"/>
</dbReference>
<dbReference type="InterPro" id="IPR001111">
    <property type="entry name" value="TGF-b_propeptide"/>
</dbReference>
<dbReference type="InterPro" id="IPR015615">
    <property type="entry name" value="TGF-beta-rel"/>
</dbReference>
<dbReference type="InterPro" id="IPR017948">
    <property type="entry name" value="TGFb_CS"/>
</dbReference>
<dbReference type="PANTHER" id="PTHR11848:SF150">
    <property type="entry name" value="GROWTH_DIFFERENTIATION FACTOR 8"/>
    <property type="match status" value="1"/>
</dbReference>
<dbReference type="PANTHER" id="PTHR11848">
    <property type="entry name" value="TGF-BETA FAMILY"/>
    <property type="match status" value="1"/>
</dbReference>
<dbReference type="Pfam" id="PF00019">
    <property type="entry name" value="TGF_beta"/>
    <property type="match status" value="1"/>
</dbReference>
<dbReference type="Pfam" id="PF00688">
    <property type="entry name" value="TGFb_propeptide"/>
    <property type="match status" value="1"/>
</dbReference>
<dbReference type="SMART" id="SM00204">
    <property type="entry name" value="TGFB"/>
    <property type="match status" value="1"/>
</dbReference>
<dbReference type="SUPFAM" id="SSF57501">
    <property type="entry name" value="Cystine-knot cytokines"/>
    <property type="match status" value="1"/>
</dbReference>
<dbReference type="PROSITE" id="PS00250">
    <property type="entry name" value="TGF_BETA_1"/>
    <property type="match status" value="1"/>
</dbReference>
<dbReference type="PROSITE" id="PS51362">
    <property type="entry name" value="TGF_BETA_2"/>
    <property type="match status" value="1"/>
</dbReference>
<evidence type="ECO:0000250" key="1">
    <source>
        <dbReference type="UniProtKB" id="O08689"/>
    </source>
</evidence>
<evidence type="ECO:0000250" key="2">
    <source>
        <dbReference type="UniProtKB" id="O14793"/>
    </source>
</evidence>
<evidence type="ECO:0000255" key="3"/>
<evidence type="ECO:0000305" key="4"/>